<evidence type="ECO:0000255" key="1">
    <source>
        <dbReference type="HAMAP-Rule" id="MF_01322"/>
    </source>
</evidence>
<accession>Q0BKC6</accession>
<keyword id="KW-0240">DNA-directed RNA polymerase</keyword>
<keyword id="KW-0460">Magnesium</keyword>
<keyword id="KW-0479">Metal-binding</keyword>
<keyword id="KW-0548">Nucleotidyltransferase</keyword>
<keyword id="KW-0804">Transcription</keyword>
<keyword id="KW-0808">Transferase</keyword>
<keyword id="KW-0862">Zinc</keyword>
<reference key="1">
    <citation type="journal article" date="2006" name="J. Bacteriol.">
        <title>Chromosome rearrangement and diversification of Francisella tularensis revealed by the type B (OSU18) genome sequence.</title>
        <authorList>
            <person name="Petrosino J.F."/>
            <person name="Xiang Q."/>
            <person name="Karpathy S.E."/>
            <person name="Jiang H."/>
            <person name="Yerrapragada S."/>
            <person name="Liu Y."/>
            <person name="Gioia J."/>
            <person name="Hemphill L."/>
            <person name="Gonzalez A."/>
            <person name="Raghavan T.M."/>
            <person name="Uzman A."/>
            <person name="Fox G.E."/>
            <person name="Highlander S."/>
            <person name="Reichard M."/>
            <person name="Morton R.J."/>
            <person name="Clinkenbeard K.D."/>
            <person name="Weinstock G.M."/>
        </authorList>
    </citation>
    <scope>NUCLEOTIDE SEQUENCE [LARGE SCALE GENOMIC DNA]</scope>
    <source>
        <strain>OSU18</strain>
    </source>
</reference>
<comment type="function">
    <text evidence="1">DNA-dependent RNA polymerase catalyzes the transcription of DNA into RNA using the four ribonucleoside triphosphates as substrates.</text>
</comment>
<comment type="catalytic activity">
    <reaction evidence="1">
        <text>RNA(n) + a ribonucleoside 5'-triphosphate = RNA(n+1) + diphosphate</text>
        <dbReference type="Rhea" id="RHEA:21248"/>
        <dbReference type="Rhea" id="RHEA-COMP:14527"/>
        <dbReference type="Rhea" id="RHEA-COMP:17342"/>
        <dbReference type="ChEBI" id="CHEBI:33019"/>
        <dbReference type="ChEBI" id="CHEBI:61557"/>
        <dbReference type="ChEBI" id="CHEBI:140395"/>
        <dbReference type="EC" id="2.7.7.6"/>
    </reaction>
</comment>
<comment type="cofactor">
    <cofactor evidence="1">
        <name>Mg(2+)</name>
        <dbReference type="ChEBI" id="CHEBI:18420"/>
    </cofactor>
    <text evidence="1">Binds 1 Mg(2+) ion per subunit.</text>
</comment>
<comment type="cofactor">
    <cofactor evidence="1">
        <name>Zn(2+)</name>
        <dbReference type="ChEBI" id="CHEBI:29105"/>
    </cofactor>
    <text evidence="1">Binds 2 Zn(2+) ions per subunit.</text>
</comment>
<comment type="subunit">
    <text evidence="1">The RNAP catalytic core consists of 2 alpha, 1 beta, 1 beta' and 1 omega subunit. When a sigma factor is associated with the core the holoenzyme is formed, which can initiate transcription.</text>
</comment>
<comment type="similarity">
    <text evidence="1">Belongs to the RNA polymerase beta' chain family.</text>
</comment>
<proteinExistence type="inferred from homology"/>
<name>RPOC_FRATO</name>
<sequence length="1417" mass="157387">MNNGILHQNYNSKKFDIIKISLASPEVIRSWSHGEVKKPETINYRTFKPERDGLFCAKIFGPIKDYECLCGKYKRLKHRGVVCERCGVEVEQAKVRRERMGHIDLVCPVVHIWYLKSLPSRIGLFLDMPLKNVEKVLYFESYIVTDPGMTPLEKKQLLTDEEYAEALENYGYEFEASMGAEAIRDLLADTDIESEIELLQAECEESKSTAKKEKAIKRLRLLETFQASGNKPEWMVMTVLPVLPPDLRPLVPIEGGRFATSDLNDLYRRVINRNNRLKKLLDLNAPDIIVRNEKRMLQEAVDALLDNGRRGRAVTGSNKRPLKSLADMIKGKQGRFRQNLLGKRVDYSGRSVITVGPSLRLHECGLPKKMALELFKPFVYSKLRLGGHATTIKQAKRMVELEEAVVWDILETVINEHPVLLNRAPTLHRLGIQAFEPRLIEGKAIQLHPLVCAAFNADFDGDQMAVHVPLTVESQLEARVLMMSTNNILSPASGQPIITPTQDIVLGLYYITREKEGARGEGKLFSSYEDVSRAYNSGTIDIHAKIKLRIDRQVFDTKGNTYNEKGVVNTTVGRALLLNILPEGLSFSLLNKVLVKKEISKIINQAFRVLGGKATVVLADKLMYAGFKYSTLSGVSVGVDDMTIPDNKEAKIEEAEKEIKQITEQYQSSLITENERYNNIINIWSKTSDEVGASMMDAISKDTVSINGEKKEIESFNSVYMMAKSGARGSYNQMRQLAGMRGLMAKPDGTMIETAITANFREGLSVLQYFTSTHGARKGLADTALKTANAGYLTRRLVDVAQDLVVIEEDCGTDDGLMFSAIVEDGEVKVPLVERALGRTLAADVVTEKGVVLLEAGTLLDENLVELLDDNGIDMIKVRSPITCKTRRGLCAKCYGRDLARERQVNVGESVGVIAAQSIGEPGTQLTMRTFHTGGAASLGITVSDIKVKTAGKIKFKNIRTVTNKEGQEIVISRAGEIIVSDTMGRVREQHKIPMGAVVPLASGKAVEIGDVIATWDPHAQPLITDVAGKVVLEDVIDGITSKHTYDDLTGQQTIEITSISQRTTSKNLKPVVKIVDEKGAELKSIPLAVGAVLNVADDSILEVGDIVAKIPLEGSKNKDITGGLPRVAELFEARRPKDAAILSPCDGMVRLGNRDTKEKQRIEIIDKNGHIVEEILLPKSRHLVVFDGEQVSRGDVLADGPTDPHDLLKYKGLEEFADYILIEAQSVYRMQGVVINDKHIETIVRQMLRKAVILDEGDSKFVKDESIELVRILEENDKLRKQGKKEVEYELVLMGITRSSLSTESFLSAASFQETTRVLTEASINSQIDNLRGLKENVLIGRLIPAGTGLAVRKESAKIEKMREELGVEDNMVFTDLSSFNPEEISFDSIQSQKEDKDINEDIEESLRNALESLDF</sequence>
<dbReference type="EC" id="2.7.7.6" evidence="1"/>
<dbReference type="EMBL" id="CP000437">
    <property type="protein sequence ID" value="ABI83458.1"/>
    <property type="molecule type" value="Genomic_DNA"/>
</dbReference>
<dbReference type="RefSeq" id="WP_003017226.1">
    <property type="nucleotide sequence ID" value="NC_017463.1"/>
</dbReference>
<dbReference type="SMR" id="Q0BKC6"/>
<dbReference type="KEGG" id="fth:FTH_1682"/>
<dbReference type="GO" id="GO:0000428">
    <property type="term" value="C:DNA-directed RNA polymerase complex"/>
    <property type="evidence" value="ECO:0007669"/>
    <property type="project" value="UniProtKB-KW"/>
</dbReference>
<dbReference type="GO" id="GO:0003677">
    <property type="term" value="F:DNA binding"/>
    <property type="evidence" value="ECO:0007669"/>
    <property type="project" value="UniProtKB-UniRule"/>
</dbReference>
<dbReference type="GO" id="GO:0003899">
    <property type="term" value="F:DNA-directed RNA polymerase activity"/>
    <property type="evidence" value="ECO:0007669"/>
    <property type="project" value="UniProtKB-UniRule"/>
</dbReference>
<dbReference type="GO" id="GO:0000287">
    <property type="term" value="F:magnesium ion binding"/>
    <property type="evidence" value="ECO:0007669"/>
    <property type="project" value="UniProtKB-UniRule"/>
</dbReference>
<dbReference type="GO" id="GO:0008270">
    <property type="term" value="F:zinc ion binding"/>
    <property type="evidence" value="ECO:0007669"/>
    <property type="project" value="UniProtKB-UniRule"/>
</dbReference>
<dbReference type="GO" id="GO:0006351">
    <property type="term" value="P:DNA-templated transcription"/>
    <property type="evidence" value="ECO:0007669"/>
    <property type="project" value="UniProtKB-UniRule"/>
</dbReference>
<dbReference type="CDD" id="cd02655">
    <property type="entry name" value="RNAP_beta'_C"/>
    <property type="match status" value="1"/>
</dbReference>
<dbReference type="CDD" id="cd01609">
    <property type="entry name" value="RNAP_beta'_N"/>
    <property type="match status" value="1"/>
</dbReference>
<dbReference type="FunFam" id="1.10.132.30:FF:000003">
    <property type="entry name" value="DNA-directed RNA polymerase subunit beta"/>
    <property type="match status" value="1"/>
</dbReference>
<dbReference type="Gene3D" id="1.10.132.30">
    <property type="match status" value="1"/>
</dbReference>
<dbReference type="Gene3D" id="1.10.150.390">
    <property type="match status" value="1"/>
</dbReference>
<dbReference type="Gene3D" id="1.10.1790.20">
    <property type="match status" value="1"/>
</dbReference>
<dbReference type="Gene3D" id="1.10.40.90">
    <property type="match status" value="1"/>
</dbReference>
<dbReference type="Gene3D" id="2.40.40.20">
    <property type="match status" value="1"/>
</dbReference>
<dbReference type="Gene3D" id="2.40.50.100">
    <property type="match status" value="3"/>
</dbReference>
<dbReference type="Gene3D" id="4.10.860.120">
    <property type="entry name" value="RNA polymerase II, clamp domain"/>
    <property type="match status" value="1"/>
</dbReference>
<dbReference type="Gene3D" id="1.10.274.100">
    <property type="entry name" value="RNA polymerase Rpb1, domain 3"/>
    <property type="match status" value="1"/>
</dbReference>
<dbReference type="HAMAP" id="MF_01322">
    <property type="entry name" value="RNApol_bact_RpoC"/>
    <property type="match status" value="1"/>
</dbReference>
<dbReference type="InterPro" id="IPR045867">
    <property type="entry name" value="DNA-dir_RpoC_beta_prime"/>
</dbReference>
<dbReference type="InterPro" id="IPR012754">
    <property type="entry name" value="DNA-dir_RpoC_beta_prime_bact"/>
</dbReference>
<dbReference type="InterPro" id="IPR000722">
    <property type="entry name" value="RNA_pol_asu"/>
</dbReference>
<dbReference type="InterPro" id="IPR006592">
    <property type="entry name" value="RNA_pol_N"/>
</dbReference>
<dbReference type="InterPro" id="IPR007080">
    <property type="entry name" value="RNA_pol_Rpb1_1"/>
</dbReference>
<dbReference type="InterPro" id="IPR007066">
    <property type="entry name" value="RNA_pol_Rpb1_3"/>
</dbReference>
<dbReference type="InterPro" id="IPR042102">
    <property type="entry name" value="RNA_pol_Rpb1_3_sf"/>
</dbReference>
<dbReference type="InterPro" id="IPR007083">
    <property type="entry name" value="RNA_pol_Rpb1_4"/>
</dbReference>
<dbReference type="InterPro" id="IPR007081">
    <property type="entry name" value="RNA_pol_Rpb1_5"/>
</dbReference>
<dbReference type="InterPro" id="IPR044893">
    <property type="entry name" value="RNA_pol_Rpb1_clamp_domain"/>
</dbReference>
<dbReference type="InterPro" id="IPR038120">
    <property type="entry name" value="Rpb1_funnel_sf"/>
</dbReference>
<dbReference type="NCBIfam" id="TIGR02386">
    <property type="entry name" value="rpoC_TIGR"/>
    <property type="match status" value="1"/>
</dbReference>
<dbReference type="PANTHER" id="PTHR19376">
    <property type="entry name" value="DNA-DIRECTED RNA POLYMERASE"/>
    <property type="match status" value="1"/>
</dbReference>
<dbReference type="PANTHER" id="PTHR19376:SF54">
    <property type="entry name" value="DNA-DIRECTED RNA POLYMERASE SUBUNIT BETA"/>
    <property type="match status" value="1"/>
</dbReference>
<dbReference type="Pfam" id="PF04997">
    <property type="entry name" value="RNA_pol_Rpb1_1"/>
    <property type="match status" value="1"/>
</dbReference>
<dbReference type="Pfam" id="PF00623">
    <property type="entry name" value="RNA_pol_Rpb1_2"/>
    <property type="match status" value="2"/>
</dbReference>
<dbReference type="Pfam" id="PF04983">
    <property type="entry name" value="RNA_pol_Rpb1_3"/>
    <property type="match status" value="1"/>
</dbReference>
<dbReference type="Pfam" id="PF05000">
    <property type="entry name" value="RNA_pol_Rpb1_4"/>
    <property type="match status" value="1"/>
</dbReference>
<dbReference type="Pfam" id="PF04998">
    <property type="entry name" value="RNA_pol_Rpb1_5"/>
    <property type="match status" value="1"/>
</dbReference>
<dbReference type="SMART" id="SM00663">
    <property type="entry name" value="RPOLA_N"/>
    <property type="match status" value="1"/>
</dbReference>
<dbReference type="SUPFAM" id="SSF64484">
    <property type="entry name" value="beta and beta-prime subunits of DNA dependent RNA-polymerase"/>
    <property type="match status" value="1"/>
</dbReference>
<protein>
    <recommendedName>
        <fullName evidence="1">DNA-directed RNA polymerase subunit beta'</fullName>
        <shortName evidence="1">RNAP subunit beta'</shortName>
        <ecNumber evidence="1">2.7.7.6</ecNumber>
    </recommendedName>
    <alternativeName>
        <fullName evidence="1">RNA polymerase subunit beta'</fullName>
    </alternativeName>
    <alternativeName>
        <fullName evidence="1">Transcriptase subunit beta'</fullName>
    </alternativeName>
</protein>
<feature type="chain" id="PRO_0000353368" description="DNA-directed RNA polymerase subunit beta'">
    <location>
        <begin position="1"/>
        <end position="1417"/>
    </location>
</feature>
<feature type="binding site" evidence="1">
    <location>
        <position position="68"/>
    </location>
    <ligand>
        <name>Zn(2+)</name>
        <dbReference type="ChEBI" id="CHEBI:29105"/>
        <label>1</label>
    </ligand>
</feature>
<feature type="binding site" evidence="1">
    <location>
        <position position="70"/>
    </location>
    <ligand>
        <name>Zn(2+)</name>
        <dbReference type="ChEBI" id="CHEBI:29105"/>
        <label>1</label>
    </ligand>
</feature>
<feature type="binding site" evidence="1">
    <location>
        <position position="83"/>
    </location>
    <ligand>
        <name>Zn(2+)</name>
        <dbReference type="ChEBI" id="CHEBI:29105"/>
        <label>1</label>
    </ligand>
</feature>
<feature type="binding site" evidence="1">
    <location>
        <position position="86"/>
    </location>
    <ligand>
        <name>Zn(2+)</name>
        <dbReference type="ChEBI" id="CHEBI:29105"/>
        <label>1</label>
    </ligand>
</feature>
<feature type="binding site" evidence="1">
    <location>
        <position position="458"/>
    </location>
    <ligand>
        <name>Mg(2+)</name>
        <dbReference type="ChEBI" id="CHEBI:18420"/>
    </ligand>
</feature>
<feature type="binding site" evidence="1">
    <location>
        <position position="460"/>
    </location>
    <ligand>
        <name>Mg(2+)</name>
        <dbReference type="ChEBI" id="CHEBI:18420"/>
    </ligand>
</feature>
<feature type="binding site" evidence="1">
    <location>
        <position position="462"/>
    </location>
    <ligand>
        <name>Mg(2+)</name>
        <dbReference type="ChEBI" id="CHEBI:18420"/>
    </ligand>
</feature>
<feature type="binding site" evidence="1">
    <location>
        <position position="811"/>
    </location>
    <ligand>
        <name>Zn(2+)</name>
        <dbReference type="ChEBI" id="CHEBI:29105"/>
        <label>2</label>
    </ligand>
</feature>
<feature type="binding site" evidence="1">
    <location>
        <position position="884"/>
    </location>
    <ligand>
        <name>Zn(2+)</name>
        <dbReference type="ChEBI" id="CHEBI:29105"/>
        <label>2</label>
    </ligand>
</feature>
<feature type="binding site" evidence="1">
    <location>
        <position position="891"/>
    </location>
    <ligand>
        <name>Zn(2+)</name>
        <dbReference type="ChEBI" id="CHEBI:29105"/>
        <label>2</label>
    </ligand>
</feature>
<feature type="binding site" evidence="1">
    <location>
        <position position="894"/>
    </location>
    <ligand>
        <name>Zn(2+)</name>
        <dbReference type="ChEBI" id="CHEBI:29105"/>
        <label>2</label>
    </ligand>
</feature>
<organism>
    <name type="scientific">Francisella tularensis subsp. holarctica (strain OSU18)</name>
    <dbReference type="NCBI Taxonomy" id="393011"/>
    <lineage>
        <taxon>Bacteria</taxon>
        <taxon>Pseudomonadati</taxon>
        <taxon>Pseudomonadota</taxon>
        <taxon>Gammaproteobacteria</taxon>
        <taxon>Thiotrichales</taxon>
        <taxon>Francisellaceae</taxon>
        <taxon>Francisella</taxon>
    </lineage>
</organism>
<gene>
    <name evidence="1" type="primary">rpoC</name>
    <name type="ordered locus">FTH_1682</name>
</gene>